<proteinExistence type="inferred from homology"/>
<organism>
    <name type="scientific">Colobus guereza</name>
    <name type="common">Mantled guereza</name>
    <name type="synonym">Eastern black-and-white colobus monkey</name>
    <dbReference type="NCBI Taxonomy" id="33548"/>
    <lineage>
        <taxon>Eukaryota</taxon>
        <taxon>Metazoa</taxon>
        <taxon>Chordata</taxon>
        <taxon>Craniata</taxon>
        <taxon>Vertebrata</taxon>
        <taxon>Euteleostomi</taxon>
        <taxon>Mammalia</taxon>
        <taxon>Eutheria</taxon>
        <taxon>Euarchontoglires</taxon>
        <taxon>Primates</taxon>
        <taxon>Haplorrhini</taxon>
        <taxon>Catarrhini</taxon>
        <taxon>Cercopithecidae</taxon>
        <taxon>Colobinae</taxon>
        <taxon>Colobus</taxon>
    </lineage>
</organism>
<evidence type="ECO:0000250" key="1"/>
<evidence type="ECO:0000255" key="2">
    <source>
        <dbReference type="PROSITE-ProRule" id="PRU00125"/>
    </source>
</evidence>
<evidence type="ECO:0000255" key="3">
    <source>
        <dbReference type="PROSITE-ProRule" id="PRU00636"/>
    </source>
</evidence>
<evidence type="ECO:0000256" key="4">
    <source>
        <dbReference type="SAM" id="MobiDB-lite"/>
    </source>
</evidence>
<evidence type="ECO:0000305" key="5"/>
<gene>
    <name type="primary">TES</name>
</gene>
<comment type="function">
    <text evidence="1">Scaffold protein that may play a role in cell adhesion, cell spreading and in the reorganization of the actin cytoskeleton. Plays a role in the regulation of cell proliferation. May act as a tumor suppressor (By similarity).</text>
</comment>
<comment type="subunit">
    <text evidence="1">Interacts via LIM domain 1 with ZYX. Interacts (via LIM domain 3) with ENAH and VASP. Interacts with ALKBH4, talin, actin, alpha-actinin, GRIP1 and PXN (By similarity). Interacts (via LIM domain 2) with ACTL7A (via N-terminus). Heterodimer with ACTL7A; the heterodimer interacts with ENAH to form a heterotrimer (By similarity).</text>
</comment>
<comment type="subcellular location">
    <subcellularLocation>
        <location evidence="1">Cytoplasm</location>
    </subcellularLocation>
    <subcellularLocation>
        <location evidence="1">Cell junction</location>
        <location evidence="1">Focal adhesion</location>
    </subcellularLocation>
    <text evidence="1">Detected along actin stress fibers.</text>
</comment>
<comment type="domain">
    <text evidence="1">The N-terminal and the C-terminal halves of the protein can associate with each other, thereby hindering interactions with ZYX.</text>
</comment>
<comment type="similarity">
    <text evidence="5">Belongs to the prickle / espinas / testin family.</text>
</comment>
<feature type="chain" id="PRO_0000260328" description="Testin">
    <location>
        <begin position="1"/>
        <end position="421"/>
    </location>
</feature>
<feature type="domain" description="PET" evidence="3">
    <location>
        <begin position="92"/>
        <end position="199"/>
    </location>
</feature>
<feature type="domain" description="LIM zinc-binding 1" evidence="2">
    <location>
        <begin position="234"/>
        <end position="297"/>
    </location>
</feature>
<feature type="domain" description="LIM zinc-binding 2" evidence="2">
    <location>
        <begin position="299"/>
        <end position="359"/>
    </location>
</feature>
<feature type="domain" description="LIM zinc-binding 3" evidence="2">
    <location>
        <begin position="362"/>
        <end position="421"/>
    </location>
</feature>
<feature type="region of interest" description="Disordered" evidence="4">
    <location>
        <begin position="133"/>
        <end position="164"/>
    </location>
</feature>
<feature type="compositionally biased region" description="Basic and acidic residues" evidence="4">
    <location>
        <begin position="155"/>
        <end position="164"/>
    </location>
</feature>
<accession>Q07DZ4</accession>
<name>TES_COLGU</name>
<reference key="1">
    <citation type="submission" date="2006-09" db="EMBL/GenBank/DDBJ databases">
        <title>NISC comparative sequencing initiative.</title>
        <authorList>
            <person name="Antonellis A."/>
            <person name="Ayele K."/>
            <person name="Benjamin B."/>
            <person name="Blakesley R.W."/>
            <person name="Boakye A."/>
            <person name="Bouffard G.G."/>
            <person name="Brinkley C."/>
            <person name="Brooks S."/>
            <person name="Chu G."/>
            <person name="Coleman H."/>
            <person name="Engle J."/>
            <person name="Gestole M."/>
            <person name="Greene A."/>
            <person name="Guan X."/>
            <person name="Gupta J."/>
            <person name="Haghighi P."/>
            <person name="Han J."/>
            <person name="Hansen N."/>
            <person name="Ho S.-L."/>
            <person name="Hu P."/>
            <person name="Hunter G."/>
            <person name="Hurle B."/>
            <person name="Idol J.R."/>
            <person name="Kwong P."/>
            <person name="Laric P."/>
            <person name="Larson S."/>
            <person name="Lee-Lin S.-Q."/>
            <person name="Legaspi R."/>
            <person name="Madden M."/>
            <person name="Maduro Q.L."/>
            <person name="Maduro V.B."/>
            <person name="Margulies E.H."/>
            <person name="Masiello C."/>
            <person name="Maskeri B."/>
            <person name="McDowell J."/>
            <person name="Mojidi H.A."/>
            <person name="Mullikin J.C."/>
            <person name="Oestreicher J.S."/>
            <person name="Park M."/>
            <person name="Portnoy M.E."/>
            <person name="Prasad A."/>
            <person name="Puri O."/>
            <person name="Reddix-Dugue N."/>
            <person name="Schandler K."/>
            <person name="Schueler M.G."/>
            <person name="Sison C."/>
            <person name="Stantripop S."/>
            <person name="Stephen E."/>
            <person name="Taye A."/>
            <person name="Thomas J.W."/>
            <person name="Thomas P.J."/>
            <person name="Tsipouri V."/>
            <person name="Ung L."/>
            <person name="Vogt J.L."/>
            <person name="Wetherby K.D."/>
            <person name="Young A."/>
            <person name="Green E.D."/>
        </authorList>
    </citation>
    <scope>NUCLEOTIDE SEQUENCE [LARGE SCALE GENOMIC DNA]</scope>
</reference>
<sequence>MDLENKVKKMGLGHEQGFGAPCLKCKEKCEGFELHFWRKICRNCKCGQEEHDVLLSNEEDRKVGKLFEDTKYTTLIAKLKSDGIPMYKRNVMILTNPVAAKKNVSINTVTYEWAPPVQNQALARQYMQMLPKEKQPVAGSEGAQYRKKQLAKQLPAHDQDPSKCHELSPREVKEMEQFVKKYKSEALGVGDVKLPCEMDAQGPKQMNIPGGDRSTPAAVGAMEDKSAEHKRTQYSCYCCKLSMKEGDPAIYAERAGYDKLWHPACFVCSTCHELLVDMIYFWKNEKLYCGRHYCDSEKPRCAGCDELIFSNEYTQAENQNWHLKHFCCFDCDSILAGEIYVMVNDKPVCKPCYVKNHAVVCQGCHNAIDPEVQRVTYNNFSWHASTECFLCSCCSKCLIGQKFMPVEGMVFCSVECKKMMS</sequence>
<dbReference type="EMBL" id="DP000193">
    <property type="protein sequence ID" value="ABJ08848.1"/>
    <property type="molecule type" value="Genomic_DNA"/>
</dbReference>
<dbReference type="SMR" id="Q07DZ4"/>
<dbReference type="GO" id="GO:0005737">
    <property type="term" value="C:cytoplasm"/>
    <property type="evidence" value="ECO:0000250"/>
    <property type="project" value="UniProtKB"/>
</dbReference>
<dbReference type="GO" id="GO:0005925">
    <property type="term" value="C:focal adhesion"/>
    <property type="evidence" value="ECO:0007669"/>
    <property type="project" value="UniProtKB-SubCell"/>
</dbReference>
<dbReference type="GO" id="GO:0008270">
    <property type="term" value="F:zinc ion binding"/>
    <property type="evidence" value="ECO:0000250"/>
    <property type="project" value="UniProtKB"/>
</dbReference>
<dbReference type="GO" id="GO:0008285">
    <property type="term" value="P:negative regulation of cell population proliferation"/>
    <property type="evidence" value="ECO:0000250"/>
    <property type="project" value="UniProtKB"/>
</dbReference>
<dbReference type="CDD" id="cd09413">
    <property type="entry name" value="LIM1_Testin"/>
    <property type="match status" value="1"/>
</dbReference>
<dbReference type="CDD" id="cd09416">
    <property type="entry name" value="LIM2_Testin"/>
    <property type="match status" value="1"/>
</dbReference>
<dbReference type="CDD" id="cd09419">
    <property type="entry name" value="LIM3_Testin"/>
    <property type="match status" value="1"/>
</dbReference>
<dbReference type="CDD" id="cd09829">
    <property type="entry name" value="PET_testin"/>
    <property type="match status" value="1"/>
</dbReference>
<dbReference type="FunFam" id="2.10.110.10:FF:000061">
    <property type="entry name" value="Testin"/>
    <property type="match status" value="1"/>
</dbReference>
<dbReference type="FunFam" id="2.10.110.10:FF:000065">
    <property type="entry name" value="Testin"/>
    <property type="match status" value="1"/>
</dbReference>
<dbReference type="FunFam" id="2.10.110.10:FF:000005">
    <property type="entry name" value="Testin isoform 1"/>
    <property type="match status" value="1"/>
</dbReference>
<dbReference type="Gene3D" id="2.10.110.10">
    <property type="entry name" value="Cysteine Rich Protein"/>
    <property type="match status" value="3"/>
</dbReference>
<dbReference type="InterPro" id="IPR034958">
    <property type="entry name" value="LIM1_Testin"/>
</dbReference>
<dbReference type="InterPro" id="IPR034959">
    <property type="entry name" value="LIM2_Testin"/>
</dbReference>
<dbReference type="InterPro" id="IPR034960">
    <property type="entry name" value="LIM3_Testin"/>
</dbReference>
<dbReference type="InterPro" id="IPR010442">
    <property type="entry name" value="PET_domain"/>
</dbReference>
<dbReference type="InterPro" id="IPR033724">
    <property type="entry name" value="PET_testin"/>
</dbReference>
<dbReference type="InterPro" id="IPR047120">
    <property type="entry name" value="Pk/Esn/Tes"/>
</dbReference>
<dbReference type="InterPro" id="IPR001781">
    <property type="entry name" value="Znf_LIM"/>
</dbReference>
<dbReference type="PANTHER" id="PTHR24211">
    <property type="entry name" value="LIM DOMAIN-CONTAINING PROTEIN"/>
    <property type="match status" value="1"/>
</dbReference>
<dbReference type="PANTHER" id="PTHR24211:SF1">
    <property type="entry name" value="TESTIN"/>
    <property type="match status" value="1"/>
</dbReference>
<dbReference type="Pfam" id="PF00412">
    <property type="entry name" value="LIM"/>
    <property type="match status" value="3"/>
</dbReference>
<dbReference type="Pfam" id="PF06297">
    <property type="entry name" value="PET"/>
    <property type="match status" value="1"/>
</dbReference>
<dbReference type="SMART" id="SM00132">
    <property type="entry name" value="LIM"/>
    <property type="match status" value="3"/>
</dbReference>
<dbReference type="SUPFAM" id="SSF57716">
    <property type="entry name" value="Glucocorticoid receptor-like (DNA-binding domain)"/>
    <property type="match status" value="2"/>
</dbReference>
<dbReference type="PROSITE" id="PS00478">
    <property type="entry name" value="LIM_DOMAIN_1"/>
    <property type="match status" value="2"/>
</dbReference>
<dbReference type="PROSITE" id="PS50023">
    <property type="entry name" value="LIM_DOMAIN_2"/>
    <property type="match status" value="3"/>
</dbReference>
<dbReference type="PROSITE" id="PS51303">
    <property type="entry name" value="PET"/>
    <property type="match status" value="1"/>
</dbReference>
<keyword id="KW-0965">Cell junction</keyword>
<keyword id="KW-0963">Cytoplasm</keyword>
<keyword id="KW-0440">LIM domain</keyword>
<keyword id="KW-0479">Metal-binding</keyword>
<keyword id="KW-0677">Repeat</keyword>
<keyword id="KW-0862">Zinc</keyword>
<protein>
    <recommendedName>
        <fullName>Testin</fullName>
    </recommendedName>
</protein>